<comment type="function">
    <text evidence="3">Catalyzes the conversion of geranylgeranyl diphosphate to phytoene. Mediates the first committed step in carotenoid biosynthesis.</text>
</comment>
<comment type="catalytic activity">
    <reaction evidence="3">
        <text>2 (2E,6E,10E)-geranylgeranyl diphosphate = 15-cis-phytoene + 2 diphosphate</text>
        <dbReference type="Rhea" id="RHEA:34475"/>
        <dbReference type="ChEBI" id="CHEBI:27787"/>
        <dbReference type="ChEBI" id="CHEBI:33019"/>
        <dbReference type="ChEBI" id="CHEBI:58756"/>
        <dbReference type="EC" id="2.5.1.32"/>
    </reaction>
</comment>
<comment type="subcellular location">
    <subcellularLocation>
        <location evidence="4">Plastid</location>
        <location evidence="4">Chloroplast membrane</location>
        <topology evidence="8">Peripheral membrane protein</topology>
    </subcellularLocation>
    <subcellularLocation>
        <location evidence="5">Plastid</location>
        <location evidence="5">Chloroplast</location>
        <location evidence="5">Plastoglobule</location>
    </subcellularLocation>
</comment>
<comment type="tissue specificity">
    <text evidence="2 4">Expressed in leaves (PubMed:15247400, PubMed:18326788). Highly expressed in developing leaves. Expressed at low levels in roots (PubMed:18326788).</text>
</comment>
<comment type="induction">
    <text evidence="2">Induced by salt stress and abscisic acid (ABA) in roots.</text>
</comment>
<comment type="similarity">
    <text evidence="8">Belongs to the phytoene/squalene synthase family.</text>
</comment>
<sequence length="420" mass="47583">MAAITLLRSASLPGLSDALARDAAAVQHVCSSYLPNNKEKKRRWILCSLKYACLGVDPAPGEIARTSPVYSSLTVTPAGEAVISSEQKVYDVVLKQAALLKRHLRPQPHTIPIVPKDLDLPRNGLKQAYHRCGEICEEYAKTFYLGTMLMTEDRRRAIWAIYVWCRRTDELVDGPNASHITPSALDRWEKRLDDLFTGRPYDMLDAALSDTISKFPIDIQPFRDMIEGMRSDLRKTRYKNFDELYMYCYYVAGTVGLMSVPVMGIAPESKATTESVYSAALALGIANQLTNILRDVGEDARRGRIYLPQDELAEAGLSDEDIFNGVVTNKWRSFMKRQIKRARMFFEEAERGVTELSQASRWPVWASLLLYRQILDEIEANDYNNFTKRAYVGKAKKLLALPVAYGRSLLMPYSLRNSQK</sequence>
<reference key="1">
    <citation type="journal article" date="2005" name="Nat. Biotechnol.">
        <title>Improving the nutritional value of Golden Rice through increased pro-vitamin A content.</title>
        <authorList>
            <person name="Paine J.A."/>
            <person name="Shipton C.A."/>
            <person name="Chaggar S."/>
            <person name="Howells R.M."/>
            <person name="Kennedy M.J."/>
            <person name="Vernon G."/>
            <person name="Wright S.Y."/>
            <person name="Hinchliffe E."/>
            <person name="Adams J.L."/>
            <person name="Silverstone A.L."/>
            <person name="Drake R."/>
        </authorList>
    </citation>
    <scope>NUCLEOTIDE SEQUENCE [MRNA]</scope>
    <scope>FUNCTION</scope>
    <scope>CATALYTIC ACTIVITY</scope>
</reference>
<reference key="2">
    <citation type="journal article" date="2010" name="Theor. Appl. Genet.">
        <title>Nucleotide diversity and molecular evolution of the PSY1 gene in Zea mays compared to some other grass species.</title>
        <authorList>
            <person name="Fu Z."/>
            <person name="Yan J."/>
            <person name="Zheng Y."/>
            <person name="Warburton M.L."/>
            <person name="Crouch J.H."/>
            <person name="Li J.S."/>
        </authorList>
    </citation>
    <scope>NUCLEOTIDE SEQUENCE [GENOMIC DNA]</scope>
</reference>
<reference key="3">
    <citation type="journal article" date="2005" name="Nature">
        <title>The map-based sequence of the rice genome.</title>
        <authorList>
            <consortium name="International rice genome sequencing project (IRGSP)"/>
        </authorList>
    </citation>
    <scope>NUCLEOTIDE SEQUENCE [LARGE SCALE GENOMIC DNA]</scope>
    <source>
        <strain>cv. Nipponbare</strain>
    </source>
</reference>
<reference key="4">
    <citation type="journal article" date="2008" name="Nucleic Acids Res.">
        <title>The rice annotation project database (RAP-DB): 2008 update.</title>
        <authorList>
            <consortium name="The rice annotation project (RAP)"/>
        </authorList>
    </citation>
    <scope>GENOME REANNOTATION</scope>
    <source>
        <strain>cv. Nipponbare</strain>
    </source>
</reference>
<reference key="5">
    <citation type="journal article" date="2013" name="Rice">
        <title>Improvement of the Oryza sativa Nipponbare reference genome using next generation sequence and optical map data.</title>
        <authorList>
            <person name="Kawahara Y."/>
            <person name="de la Bastide M."/>
            <person name="Hamilton J.P."/>
            <person name="Kanamori H."/>
            <person name="McCombie W.R."/>
            <person name="Ouyang S."/>
            <person name="Schwartz D.C."/>
            <person name="Tanaka T."/>
            <person name="Wu J."/>
            <person name="Zhou S."/>
            <person name="Childs K.L."/>
            <person name="Davidson R.M."/>
            <person name="Lin H."/>
            <person name="Quesada-Ocampo L."/>
            <person name="Vaillancourt B."/>
            <person name="Sakai H."/>
            <person name="Lee S.S."/>
            <person name="Kim J."/>
            <person name="Numa H."/>
            <person name="Itoh T."/>
            <person name="Buell C.R."/>
            <person name="Matsumoto T."/>
        </authorList>
    </citation>
    <scope>GENOME REANNOTATION</scope>
    <source>
        <strain>cv. Nipponbare</strain>
    </source>
</reference>
<reference key="6">
    <citation type="journal article" date="2005" name="PLoS Biol.">
        <title>The genomes of Oryza sativa: a history of duplications.</title>
        <authorList>
            <person name="Yu J."/>
            <person name="Wang J."/>
            <person name="Lin W."/>
            <person name="Li S."/>
            <person name="Li H."/>
            <person name="Zhou J."/>
            <person name="Ni P."/>
            <person name="Dong W."/>
            <person name="Hu S."/>
            <person name="Zeng C."/>
            <person name="Zhang J."/>
            <person name="Zhang Y."/>
            <person name="Li R."/>
            <person name="Xu Z."/>
            <person name="Li S."/>
            <person name="Li X."/>
            <person name="Zheng H."/>
            <person name="Cong L."/>
            <person name="Lin L."/>
            <person name="Yin J."/>
            <person name="Geng J."/>
            <person name="Li G."/>
            <person name="Shi J."/>
            <person name="Liu J."/>
            <person name="Lv H."/>
            <person name="Li J."/>
            <person name="Wang J."/>
            <person name="Deng Y."/>
            <person name="Ran L."/>
            <person name="Shi X."/>
            <person name="Wang X."/>
            <person name="Wu Q."/>
            <person name="Li C."/>
            <person name="Ren X."/>
            <person name="Wang J."/>
            <person name="Wang X."/>
            <person name="Li D."/>
            <person name="Liu D."/>
            <person name="Zhang X."/>
            <person name="Ji Z."/>
            <person name="Zhao W."/>
            <person name="Sun Y."/>
            <person name="Zhang Z."/>
            <person name="Bao J."/>
            <person name="Han Y."/>
            <person name="Dong L."/>
            <person name="Ji J."/>
            <person name="Chen P."/>
            <person name="Wu S."/>
            <person name="Liu J."/>
            <person name="Xiao Y."/>
            <person name="Bu D."/>
            <person name="Tan J."/>
            <person name="Yang L."/>
            <person name="Ye C."/>
            <person name="Zhang J."/>
            <person name="Xu J."/>
            <person name="Zhou Y."/>
            <person name="Yu Y."/>
            <person name="Zhang B."/>
            <person name="Zhuang S."/>
            <person name="Wei H."/>
            <person name="Liu B."/>
            <person name="Lei M."/>
            <person name="Yu H."/>
            <person name="Li Y."/>
            <person name="Xu H."/>
            <person name="Wei S."/>
            <person name="He X."/>
            <person name="Fang L."/>
            <person name="Zhang Z."/>
            <person name="Zhang Y."/>
            <person name="Huang X."/>
            <person name="Su Z."/>
            <person name="Tong W."/>
            <person name="Li J."/>
            <person name="Tong Z."/>
            <person name="Li S."/>
            <person name="Ye J."/>
            <person name="Wang L."/>
            <person name="Fang L."/>
            <person name="Lei T."/>
            <person name="Chen C.-S."/>
            <person name="Chen H.-C."/>
            <person name="Xu Z."/>
            <person name="Li H."/>
            <person name="Huang H."/>
            <person name="Zhang F."/>
            <person name="Xu H."/>
            <person name="Li N."/>
            <person name="Zhao C."/>
            <person name="Li S."/>
            <person name="Dong L."/>
            <person name="Huang Y."/>
            <person name="Li L."/>
            <person name="Xi Y."/>
            <person name="Qi Q."/>
            <person name="Li W."/>
            <person name="Zhang B."/>
            <person name="Hu W."/>
            <person name="Zhang Y."/>
            <person name="Tian X."/>
            <person name="Jiao Y."/>
            <person name="Liang X."/>
            <person name="Jin J."/>
            <person name="Gao L."/>
            <person name="Zheng W."/>
            <person name="Hao B."/>
            <person name="Liu S.-M."/>
            <person name="Wang W."/>
            <person name="Yuan L."/>
            <person name="Cao M."/>
            <person name="McDermott J."/>
            <person name="Samudrala R."/>
            <person name="Wang J."/>
            <person name="Wong G.K.-S."/>
            <person name="Yang H."/>
        </authorList>
    </citation>
    <scope>NUCLEOTIDE SEQUENCE [LARGE SCALE GENOMIC DNA]</scope>
    <source>
        <strain>cv. Nipponbare</strain>
    </source>
</reference>
<reference key="7">
    <citation type="journal article" date="2003" name="Science">
        <title>Collection, mapping, and annotation of over 28,000 cDNA clones from japonica rice.</title>
        <authorList>
            <consortium name="The rice full-length cDNA consortium"/>
        </authorList>
    </citation>
    <scope>NUCLEOTIDE SEQUENCE [LARGE SCALE MRNA]</scope>
    <source>
        <strain>cv. Nipponbare</strain>
    </source>
</reference>
<reference key="8">
    <citation type="journal article" date="2004" name="Plant Physiol.">
        <title>Gene duplication in the carotenoid biosynthetic pathway preceded evolution of the grasses.</title>
        <authorList>
            <person name="Gallagher C.E."/>
            <person name="Matthews P.D."/>
            <person name="Li F."/>
            <person name="Wurtzel E.T."/>
        </authorList>
    </citation>
    <scope>TISSUE SPECIFICITY</scope>
</reference>
<reference key="9">
    <citation type="journal article" date="2008" name="Plant Physiol.">
        <title>A third phytoene synthase is devoted to abiotic stress-induced abscisic acid formation in rice and defines functional diversification of phytoene synthase genes.</title>
        <authorList>
            <person name="Welsch R."/>
            <person name="Wuest F."/>
            <person name="Baer C."/>
            <person name="Al-Babili S."/>
            <person name="Beyer P."/>
        </authorList>
    </citation>
    <scope>SUBCELLULAR LOCATION</scope>
    <scope>TISSUE SPECIFICITY</scope>
    <scope>INDUCTION</scope>
</reference>
<reference key="10">
    <citation type="journal article" date="2012" name="Plant Cell">
        <title>Plastid localization of the key carotenoid enzyme phytoene synthase is altered by isozyme, allelic variation, and activity.</title>
        <authorList>
            <person name="Shumskaya M."/>
            <person name="Bradbury L.M."/>
            <person name="Monaco R.R."/>
            <person name="Wurtzel E.T."/>
        </authorList>
    </citation>
    <scope>SUBCELLULAR LOCATION</scope>
</reference>
<protein>
    <recommendedName>
        <fullName evidence="6">Phytoene synthase 1, chloroplastic</fullName>
        <shortName evidence="7">OsPSY1</shortName>
        <ecNumber evidence="3">2.5.1.32</ecNumber>
    </recommendedName>
</protein>
<accession>Q5Z5B7</accession>
<accession>Q6KBZ6</accession>
<evidence type="ECO:0000255" key="1"/>
<evidence type="ECO:0000269" key="2">
    <source>
    </source>
</evidence>
<evidence type="ECO:0000269" key="3">
    <source>
    </source>
</evidence>
<evidence type="ECO:0000269" key="4">
    <source>
    </source>
</evidence>
<evidence type="ECO:0000269" key="5">
    <source>
    </source>
</evidence>
<evidence type="ECO:0000303" key="6">
    <source>
    </source>
</evidence>
<evidence type="ECO:0000303" key="7">
    <source>
    </source>
</evidence>
<evidence type="ECO:0000305" key="8"/>
<evidence type="ECO:0000312" key="9">
    <source>
        <dbReference type="EMBL" id="BAD62106.1"/>
    </source>
</evidence>
<evidence type="ECO:0000312" key="10">
    <source>
        <dbReference type="EMBL" id="BAF20561.1"/>
    </source>
</evidence>
<evidence type="ECO:0000312" key="11">
    <source>
        <dbReference type="EMBL" id="EAZ38360.1"/>
    </source>
</evidence>
<name>PSY1_ORYSJ</name>
<proteinExistence type="evidence at protein level"/>
<feature type="transit peptide" description="Chloroplast" evidence="1">
    <location>
        <begin position="1"/>
        <end position="70"/>
    </location>
</feature>
<feature type="chain" id="PRO_0000444952" description="Phytoene synthase 1, chloroplastic">
    <location>
        <begin position="71"/>
        <end position="420"/>
    </location>
</feature>
<gene>
    <name evidence="6" type="primary">PSY1</name>
    <name evidence="10" type="ordered locus">Os06g0729000</name>
    <name evidence="11" type="ORF">OsJ_22735</name>
    <name evidence="9" type="ORF">OSJNBa0069C14.4-1</name>
</gene>
<organism>
    <name type="scientific">Oryza sativa subsp. japonica</name>
    <name type="common">Rice</name>
    <dbReference type="NCBI Taxonomy" id="39947"/>
    <lineage>
        <taxon>Eukaryota</taxon>
        <taxon>Viridiplantae</taxon>
        <taxon>Streptophyta</taxon>
        <taxon>Embryophyta</taxon>
        <taxon>Tracheophyta</taxon>
        <taxon>Spermatophyta</taxon>
        <taxon>Magnoliopsida</taxon>
        <taxon>Liliopsida</taxon>
        <taxon>Poales</taxon>
        <taxon>Poaceae</taxon>
        <taxon>BOP clade</taxon>
        <taxon>Oryzoideae</taxon>
        <taxon>Oryzeae</taxon>
        <taxon>Oryzinae</taxon>
        <taxon>Oryza</taxon>
        <taxon>Oryza sativa</taxon>
    </lineage>
</organism>
<keyword id="KW-0125">Carotenoid biosynthesis</keyword>
<keyword id="KW-0150">Chloroplast</keyword>
<keyword id="KW-0414">Isoprene biosynthesis</keyword>
<keyword id="KW-0472">Membrane</keyword>
<keyword id="KW-0934">Plastid</keyword>
<keyword id="KW-1185">Reference proteome</keyword>
<keyword id="KW-0808">Transferase</keyword>
<keyword id="KW-0809">Transit peptide</keyword>
<dbReference type="EC" id="2.5.1.32" evidence="3"/>
<dbReference type="EMBL" id="AJ715786">
    <property type="protein sequence ID" value="CAG29391.1"/>
    <property type="molecule type" value="mRNA"/>
</dbReference>
<dbReference type="EMBL" id="FJ971175">
    <property type="protein sequence ID" value="ACY70858.1"/>
    <property type="molecule type" value="Genomic_DNA"/>
</dbReference>
<dbReference type="EMBL" id="FJ971176">
    <property type="protein sequence ID" value="ACY70859.1"/>
    <property type="molecule type" value="Genomic_DNA"/>
</dbReference>
<dbReference type="EMBL" id="AP005750">
    <property type="protein sequence ID" value="BAD62106.1"/>
    <property type="molecule type" value="Genomic_DNA"/>
</dbReference>
<dbReference type="EMBL" id="AP008212">
    <property type="protein sequence ID" value="BAF20561.1"/>
    <property type="molecule type" value="Genomic_DNA"/>
</dbReference>
<dbReference type="EMBL" id="AP014962">
    <property type="protein sequence ID" value="BAS99629.1"/>
    <property type="molecule type" value="Genomic_DNA"/>
</dbReference>
<dbReference type="EMBL" id="CM000143">
    <property type="protein sequence ID" value="EAZ38360.1"/>
    <property type="molecule type" value="Genomic_DNA"/>
</dbReference>
<dbReference type="EMBL" id="AK070716">
    <property type="protein sequence ID" value="BAG92106.1"/>
    <property type="molecule type" value="mRNA"/>
</dbReference>
<dbReference type="RefSeq" id="XP_015642513.1">
    <property type="nucleotide sequence ID" value="XM_015787027.1"/>
</dbReference>
<dbReference type="RefSeq" id="XP_015642514.1">
    <property type="nucleotide sequence ID" value="XM_015787028.1"/>
</dbReference>
<dbReference type="SMR" id="Q5Z5B7"/>
<dbReference type="FunCoup" id="Q5Z5B7">
    <property type="interactions" value="133"/>
</dbReference>
<dbReference type="STRING" id="39947.Q5Z5B7"/>
<dbReference type="PaxDb" id="39947-Q5Z5B7"/>
<dbReference type="EnsemblPlants" id="Os06t0729000-01">
    <property type="protein sequence ID" value="Os06t0729000-01"/>
    <property type="gene ID" value="Os06g0729000"/>
</dbReference>
<dbReference type="GeneID" id="4342137"/>
<dbReference type="Gramene" id="Os06t0729000-01">
    <property type="protein sequence ID" value="Os06t0729000-01"/>
    <property type="gene ID" value="Os06g0729000"/>
</dbReference>
<dbReference type="KEGG" id="dosa:Os06g0729000"/>
<dbReference type="KEGG" id="osa:4342137"/>
<dbReference type="eggNOG" id="KOG1459">
    <property type="taxonomic scope" value="Eukaryota"/>
</dbReference>
<dbReference type="HOGENOM" id="CLU_037269_2_0_1"/>
<dbReference type="InParanoid" id="Q5Z5B7"/>
<dbReference type="OMA" id="NEAYNRC"/>
<dbReference type="OrthoDB" id="6600518at2759"/>
<dbReference type="PlantReactome" id="R-OSA-1119449">
    <property type="pathway name" value="Carotenoid biosynthesis"/>
</dbReference>
<dbReference type="Proteomes" id="UP000000763">
    <property type="component" value="Chromosome 6"/>
</dbReference>
<dbReference type="Proteomes" id="UP000007752">
    <property type="component" value="Chromosome 6"/>
</dbReference>
<dbReference type="Proteomes" id="UP000059680">
    <property type="component" value="Chromosome 6"/>
</dbReference>
<dbReference type="ExpressionAtlas" id="Q5Z5B7">
    <property type="expression patterns" value="baseline and differential"/>
</dbReference>
<dbReference type="GO" id="GO:0031969">
    <property type="term" value="C:chloroplast membrane"/>
    <property type="evidence" value="ECO:0007669"/>
    <property type="project" value="UniProtKB-SubCell"/>
</dbReference>
<dbReference type="GO" id="GO:0010287">
    <property type="term" value="C:plastoglobule"/>
    <property type="evidence" value="ECO:0000314"/>
    <property type="project" value="UniProtKB"/>
</dbReference>
<dbReference type="GO" id="GO:0046905">
    <property type="term" value="F:15-cis-phytoene synthase activity"/>
    <property type="evidence" value="ECO:0000314"/>
    <property type="project" value="UniProtKB"/>
</dbReference>
<dbReference type="GO" id="GO:0004311">
    <property type="term" value="F:geranylgeranyl diphosphate synthase activity"/>
    <property type="evidence" value="ECO:0007669"/>
    <property type="project" value="InterPro"/>
</dbReference>
<dbReference type="GO" id="GO:0051996">
    <property type="term" value="F:squalene synthase [NAD(P)H] activity"/>
    <property type="evidence" value="ECO:0007669"/>
    <property type="project" value="InterPro"/>
</dbReference>
<dbReference type="GO" id="GO:0016117">
    <property type="term" value="P:carotenoid biosynthetic process"/>
    <property type="evidence" value="ECO:0000314"/>
    <property type="project" value="UniProtKB"/>
</dbReference>
<dbReference type="CDD" id="cd00683">
    <property type="entry name" value="Trans_IPPS_HH"/>
    <property type="match status" value="1"/>
</dbReference>
<dbReference type="FunFam" id="1.10.600.10:FF:000004">
    <property type="entry name" value="Phytoene synthase chloroplastic"/>
    <property type="match status" value="1"/>
</dbReference>
<dbReference type="Gene3D" id="1.10.600.10">
    <property type="entry name" value="Farnesyl Diphosphate Synthase"/>
    <property type="match status" value="1"/>
</dbReference>
<dbReference type="InterPro" id="IPR008949">
    <property type="entry name" value="Isoprenoid_synthase_dom_sf"/>
</dbReference>
<dbReference type="InterPro" id="IPR002060">
    <property type="entry name" value="Squ/phyt_synthse"/>
</dbReference>
<dbReference type="InterPro" id="IPR019845">
    <property type="entry name" value="Squalene/phytoene_synthase_CS"/>
</dbReference>
<dbReference type="InterPro" id="IPR044843">
    <property type="entry name" value="Trans_IPPS_bact-type"/>
</dbReference>
<dbReference type="InterPro" id="IPR033904">
    <property type="entry name" value="Trans_IPPS_HH"/>
</dbReference>
<dbReference type="PANTHER" id="PTHR31480">
    <property type="entry name" value="BIFUNCTIONAL LYCOPENE CYCLASE/PHYTOENE SYNTHASE"/>
    <property type="match status" value="1"/>
</dbReference>
<dbReference type="Pfam" id="PF00494">
    <property type="entry name" value="SQS_PSY"/>
    <property type="match status" value="1"/>
</dbReference>
<dbReference type="SFLD" id="SFLDS00005">
    <property type="entry name" value="Isoprenoid_Synthase_Type_I"/>
    <property type="match status" value="1"/>
</dbReference>
<dbReference type="SFLD" id="SFLDG01212">
    <property type="entry name" value="Phytoene_synthase_like"/>
    <property type="match status" value="1"/>
</dbReference>
<dbReference type="SUPFAM" id="SSF48576">
    <property type="entry name" value="Terpenoid synthases"/>
    <property type="match status" value="1"/>
</dbReference>
<dbReference type="PROSITE" id="PS01044">
    <property type="entry name" value="SQUALEN_PHYTOEN_SYN_1"/>
    <property type="match status" value="1"/>
</dbReference>
<dbReference type="PROSITE" id="PS01045">
    <property type="entry name" value="SQUALEN_PHYTOEN_SYN_2"/>
    <property type="match status" value="1"/>
</dbReference>